<sequence>MAVPARRTSKAKKNKRRTHYKVTAPSVNFDETTGDYSRSHRVSLKGYYKGRKIAKAASAE</sequence>
<organism>
    <name type="scientific">Streptococcus pneumoniae serotype 19F (strain G54)</name>
    <dbReference type="NCBI Taxonomy" id="512566"/>
    <lineage>
        <taxon>Bacteria</taxon>
        <taxon>Bacillati</taxon>
        <taxon>Bacillota</taxon>
        <taxon>Bacilli</taxon>
        <taxon>Lactobacillales</taxon>
        <taxon>Streptococcaceae</taxon>
        <taxon>Streptococcus</taxon>
    </lineage>
</organism>
<protein>
    <recommendedName>
        <fullName evidence="1">Large ribosomal subunit protein bL32</fullName>
    </recommendedName>
    <alternativeName>
        <fullName evidence="2">50S ribosomal protein L32</fullName>
    </alternativeName>
</protein>
<reference key="1">
    <citation type="journal article" date="2001" name="Microb. Drug Resist.">
        <title>Annotated draft genomic sequence from a Streptococcus pneumoniae type 19F clinical isolate.</title>
        <authorList>
            <person name="Dopazo J."/>
            <person name="Mendoza A."/>
            <person name="Herrero J."/>
            <person name="Caldara F."/>
            <person name="Humbert Y."/>
            <person name="Friedli L."/>
            <person name="Guerrier M."/>
            <person name="Grand-Schenk E."/>
            <person name="Gandin C."/>
            <person name="de Francesco M."/>
            <person name="Polissi A."/>
            <person name="Buell G."/>
            <person name="Feger G."/>
            <person name="Garcia E."/>
            <person name="Peitsch M."/>
            <person name="Garcia-Bustos J.F."/>
        </authorList>
    </citation>
    <scope>NUCLEOTIDE SEQUENCE [LARGE SCALE GENOMIC DNA]</scope>
    <source>
        <strain>G54</strain>
    </source>
</reference>
<reference key="2">
    <citation type="submission" date="2008-03" db="EMBL/GenBank/DDBJ databases">
        <title>Pneumococcal beta glucoside metabolism investigated by whole genome comparison.</title>
        <authorList>
            <person name="Mulas L."/>
            <person name="Trappetti C."/>
            <person name="Hakenbeck R."/>
            <person name="Iannelli F."/>
            <person name="Pozzi G."/>
            <person name="Davidsen T.M."/>
            <person name="Tettelin H."/>
            <person name="Oggioni M."/>
        </authorList>
    </citation>
    <scope>NUCLEOTIDE SEQUENCE [LARGE SCALE GENOMIC DNA]</scope>
    <source>
        <strain>G54</strain>
    </source>
</reference>
<evidence type="ECO:0000255" key="1">
    <source>
        <dbReference type="HAMAP-Rule" id="MF_00340"/>
    </source>
</evidence>
<evidence type="ECO:0000305" key="2"/>
<dbReference type="EMBL" id="CP001015">
    <property type="protein sequence ID" value="ACF55933.1"/>
    <property type="molecule type" value="Genomic_DNA"/>
</dbReference>
<dbReference type="SMR" id="B5E3E2"/>
<dbReference type="KEGG" id="spx:SPG_2072"/>
<dbReference type="HOGENOM" id="CLU_129084_2_3_9"/>
<dbReference type="GO" id="GO:0015934">
    <property type="term" value="C:large ribosomal subunit"/>
    <property type="evidence" value="ECO:0007669"/>
    <property type="project" value="InterPro"/>
</dbReference>
<dbReference type="GO" id="GO:0003735">
    <property type="term" value="F:structural constituent of ribosome"/>
    <property type="evidence" value="ECO:0007669"/>
    <property type="project" value="InterPro"/>
</dbReference>
<dbReference type="GO" id="GO:0006412">
    <property type="term" value="P:translation"/>
    <property type="evidence" value="ECO:0007669"/>
    <property type="project" value="UniProtKB-UniRule"/>
</dbReference>
<dbReference type="HAMAP" id="MF_00340">
    <property type="entry name" value="Ribosomal_bL32"/>
    <property type="match status" value="1"/>
</dbReference>
<dbReference type="InterPro" id="IPR002677">
    <property type="entry name" value="Ribosomal_bL32"/>
</dbReference>
<dbReference type="InterPro" id="IPR044957">
    <property type="entry name" value="Ribosomal_bL32_bact"/>
</dbReference>
<dbReference type="InterPro" id="IPR011332">
    <property type="entry name" value="Ribosomal_zn-bd"/>
</dbReference>
<dbReference type="NCBIfam" id="TIGR01031">
    <property type="entry name" value="rpmF_bact"/>
    <property type="match status" value="1"/>
</dbReference>
<dbReference type="PANTHER" id="PTHR35534">
    <property type="entry name" value="50S RIBOSOMAL PROTEIN L32"/>
    <property type="match status" value="1"/>
</dbReference>
<dbReference type="PANTHER" id="PTHR35534:SF1">
    <property type="entry name" value="LARGE RIBOSOMAL SUBUNIT PROTEIN BL32"/>
    <property type="match status" value="1"/>
</dbReference>
<dbReference type="Pfam" id="PF01783">
    <property type="entry name" value="Ribosomal_L32p"/>
    <property type="match status" value="1"/>
</dbReference>
<dbReference type="SUPFAM" id="SSF57829">
    <property type="entry name" value="Zn-binding ribosomal proteins"/>
    <property type="match status" value="1"/>
</dbReference>
<accession>B5E3E2</accession>
<name>RL32_STRP4</name>
<proteinExistence type="inferred from homology"/>
<feature type="chain" id="PRO_1000120178" description="Large ribosomal subunit protein bL32">
    <location>
        <begin position="1"/>
        <end position="60"/>
    </location>
</feature>
<comment type="similarity">
    <text evidence="1">Belongs to the bacterial ribosomal protein bL32 family.</text>
</comment>
<gene>
    <name evidence="1" type="primary">rpmF</name>
    <name type="ordered locus">SPG_2072</name>
</gene>
<keyword id="KW-0687">Ribonucleoprotein</keyword>
<keyword id="KW-0689">Ribosomal protein</keyword>